<keyword id="KW-1015">Disulfide bond</keyword>
<keyword id="KW-0378">Hydrolase</keyword>
<keyword id="KW-1185">Reference proteome</keyword>
<keyword id="KW-0964">Secreted</keyword>
<keyword id="KW-0719">Serine esterase</keyword>
<keyword id="KW-0732">Signal</keyword>
<feature type="signal peptide" evidence="3">
    <location>
        <begin position="1"/>
        <end position="17"/>
    </location>
</feature>
<feature type="propeptide" id="PRO_0000455278" evidence="1">
    <location>
        <begin position="18"/>
        <end position="28"/>
    </location>
</feature>
<feature type="chain" id="PRO_0000455279" description="Cutinase">
    <location>
        <begin position="29"/>
        <end position="248"/>
    </location>
</feature>
<feature type="region of interest" description="Lid covering the active site of the uncomplexed enzyme" evidence="1">
    <location>
        <begin position="31"/>
        <end position="70"/>
    </location>
</feature>
<feature type="active site" description="Nucleophile" evidence="2">
    <location>
        <position position="164"/>
    </location>
</feature>
<feature type="active site" evidence="2">
    <location>
        <position position="216"/>
    </location>
</feature>
<feature type="active site" description="Proton donor/acceptor" evidence="2">
    <location>
        <position position="229"/>
    </location>
</feature>
<feature type="site" description="Transition state stabilizer" evidence="1">
    <location>
        <position position="90"/>
    </location>
</feature>
<feature type="site" description="Transition state stabilizer" evidence="1">
    <location>
        <position position="165"/>
    </location>
</feature>
<feature type="disulfide bond" evidence="1">
    <location>
        <begin position="55"/>
        <end position="91"/>
    </location>
</feature>
<feature type="disulfide bond" evidence="1">
    <location>
        <begin position="79"/>
        <end position="153"/>
    </location>
</feature>
<feature type="disulfide bond" evidence="1">
    <location>
        <begin position="212"/>
        <end position="219"/>
    </location>
</feature>
<sequence length="248" mass="25924">MRSLAILTTLLAGHAFAYPKPAPQSVNRRDWPSINEFLSELAKVMPIGDTITAACDLISDGEDAAASLFGISETENDPCGDVTVLFARGTCDPGNVGVLVGPWFFDSLQTALGSRTLGVKGVPYPASVQDFLSGSVQNGINMANQIKSVLQSCPNTKLVLGGYSQGSMVVHNAASNLDAATMSKISAVVLFGDPYYGKPVANFDAAKTLVVCHDGDNICQGGDIILLPHLTYAEDADTAAAFVVPLVS</sequence>
<reference evidence="7" key="1">
    <citation type="journal article" date="2008" name="Nat. Biotechnol.">
        <title>Genome sequencing and analysis of the biomass-degrading fungus Trichoderma reesei (syn. Hypocrea jecorina).</title>
        <authorList>
            <person name="Martinez D."/>
            <person name="Berka R.M."/>
            <person name="Henrissat B."/>
            <person name="Saloheimo M."/>
            <person name="Arvas M."/>
            <person name="Baker S.E."/>
            <person name="Chapman J."/>
            <person name="Chertkov O."/>
            <person name="Coutinho P.M."/>
            <person name="Cullen D."/>
            <person name="Danchin E.G."/>
            <person name="Grigoriev I.V."/>
            <person name="Harris P."/>
            <person name="Jackson M."/>
            <person name="Kubicek C.P."/>
            <person name="Han C.S."/>
            <person name="Ho I."/>
            <person name="Larrondo L.F."/>
            <person name="de Leon A.L."/>
            <person name="Magnuson J.K."/>
            <person name="Merino S."/>
            <person name="Misra M."/>
            <person name="Nelson B."/>
            <person name="Putnam N."/>
            <person name="Robbertse B."/>
            <person name="Salamov A.A."/>
            <person name="Schmoll M."/>
            <person name="Terry A."/>
            <person name="Thayer N."/>
            <person name="Westerholm-Parvinen A."/>
            <person name="Schoch C.L."/>
            <person name="Yao J."/>
            <person name="Barabote R."/>
            <person name="Nelson M.A."/>
            <person name="Detter C."/>
            <person name="Bruce D."/>
            <person name="Kuske C.R."/>
            <person name="Xie G."/>
            <person name="Richardson P."/>
            <person name="Rokhsar D.S."/>
            <person name="Lucas S.M."/>
            <person name="Rubin E.M."/>
            <person name="Dunn-Coleman N."/>
            <person name="Ward M."/>
            <person name="Brettin T.S."/>
        </authorList>
    </citation>
    <scope>NUCLEOTIDE SEQUENCE [LARGE SCALE GENOMIC DNA]</scope>
    <source>
        <strain evidence="7">QM6a</strain>
    </source>
</reference>
<name>CUTI1_HYPJQ</name>
<gene>
    <name evidence="6" type="ORF">TRIREDRAFT_60489</name>
</gene>
<protein>
    <recommendedName>
        <fullName evidence="4">Cutinase</fullName>
        <ecNumber evidence="4">3.1.1.74</ecNumber>
    </recommendedName>
</protein>
<proteinExistence type="inferred from homology"/>
<comment type="function">
    <text evidence="1">Catalyzes the hydrolysis of complex carboxylic polyesters found in the cell wall of plants (By similarity). Degrades cutin, a macromolecule that forms the structure of the plant cuticle (By similarity).</text>
</comment>
<comment type="catalytic activity">
    <reaction evidence="4">
        <text>cutin + H2O = cutin monomers.</text>
        <dbReference type="EC" id="3.1.1.74"/>
    </reaction>
</comment>
<comment type="activity regulation">
    <text evidence="1">Weakly inhibited by n-undecyl phosphonate (C11Y4) (By similarity). Activity unaffected by paraoxon (By similarity).</text>
</comment>
<comment type="subcellular location">
    <subcellularLocation>
        <location evidence="4">Secreted</location>
    </subcellularLocation>
</comment>
<comment type="domain">
    <text evidence="1">In contract to classical cutinases, possesses a lid formed by two N-terminal helices which covers its active site (By similarity). The lid opens in the presence of surfactants to uncover the catalytic crevice, allowing enzyme activity and inhibition (By similarity).</text>
</comment>
<comment type="similarity">
    <text evidence="4">Belongs to the cutinase family.</text>
</comment>
<comment type="sequence caution" evidence="5">
    <conflict type="erroneous gene model prediction">
        <sequence resource="EMBL-CDS" id="EGR49371"/>
    </conflict>
</comment>
<dbReference type="EC" id="3.1.1.74" evidence="4"/>
<dbReference type="EMBL" id="GL985062">
    <property type="protein sequence ID" value="EGR49371.1"/>
    <property type="status" value="ALT_SEQ"/>
    <property type="molecule type" value="Genomic_DNA"/>
</dbReference>
<dbReference type="RefSeq" id="XP_006964533.1">
    <property type="nucleotide sequence ID" value="XM_006964471.1"/>
</dbReference>
<dbReference type="SMR" id="G0RH85"/>
<dbReference type="STRING" id="431241.G0RH85"/>
<dbReference type="ESTHER" id="hypjq-g0rh85">
    <property type="family name" value="Cutinase"/>
</dbReference>
<dbReference type="EnsemblFungi" id="EGR49371">
    <property type="protein sequence ID" value="EGR49371"/>
    <property type="gene ID" value="TRIREDRAFT_60489"/>
</dbReference>
<dbReference type="GeneID" id="18486631"/>
<dbReference type="KEGG" id="tre:TRIREDRAFT_60489"/>
<dbReference type="VEuPathDB" id="FungiDB:TRIREDRAFT_60489"/>
<dbReference type="eggNOG" id="ENOG502S3AW">
    <property type="taxonomic scope" value="Eukaryota"/>
</dbReference>
<dbReference type="HOGENOM" id="CLU_040058_2_2_1"/>
<dbReference type="OrthoDB" id="2975078at2759"/>
<dbReference type="BRENDA" id="3.1.1.3">
    <property type="organism ID" value="6451"/>
</dbReference>
<dbReference type="BRENDA" id="3.1.1.74">
    <property type="organism ID" value="6451"/>
</dbReference>
<dbReference type="Proteomes" id="UP000008984">
    <property type="component" value="Unassembled WGS sequence"/>
</dbReference>
<dbReference type="GO" id="GO:0005576">
    <property type="term" value="C:extracellular region"/>
    <property type="evidence" value="ECO:0007669"/>
    <property type="project" value="UniProtKB-SubCell"/>
</dbReference>
<dbReference type="GO" id="GO:0050525">
    <property type="term" value="F:cutinase activity"/>
    <property type="evidence" value="ECO:0007669"/>
    <property type="project" value="UniProtKB-EC"/>
</dbReference>
<dbReference type="GO" id="GO:0016052">
    <property type="term" value="P:carbohydrate catabolic process"/>
    <property type="evidence" value="ECO:0007669"/>
    <property type="project" value="TreeGrafter"/>
</dbReference>
<dbReference type="Gene3D" id="3.40.50.1820">
    <property type="entry name" value="alpha/beta hydrolase"/>
    <property type="match status" value="1"/>
</dbReference>
<dbReference type="InterPro" id="IPR029058">
    <property type="entry name" value="AB_hydrolase_fold"/>
</dbReference>
<dbReference type="InterPro" id="IPR000675">
    <property type="entry name" value="Cutinase/axe"/>
</dbReference>
<dbReference type="InterPro" id="IPR043580">
    <property type="entry name" value="CUTINASE_1"/>
</dbReference>
<dbReference type="InterPro" id="IPR043579">
    <property type="entry name" value="CUTINASE_2"/>
</dbReference>
<dbReference type="InterPro" id="IPR011150">
    <property type="entry name" value="Cutinase_monf"/>
</dbReference>
<dbReference type="PANTHER" id="PTHR48250:SF1">
    <property type="entry name" value="CUTINASE"/>
    <property type="match status" value="1"/>
</dbReference>
<dbReference type="PANTHER" id="PTHR48250">
    <property type="entry name" value="CUTINASE 2-RELATED"/>
    <property type="match status" value="1"/>
</dbReference>
<dbReference type="Pfam" id="PF01083">
    <property type="entry name" value="Cutinase"/>
    <property type="match status" value="1"/>
</dbReference>
<dbReference type="PRINTS" id="PR00129">
    <property type="entry name" value="CUTINASE"/>
</dbReference>
<dbReference type="SMART" id="SM01110">
    <property type="entry name" value="Cutinase"/>
    <property type="match status" value="1"/>
</dbReference>
<dbReference type="SUPFAM" id="SSF53474">
    <property type="entry name" value="alpha/beta-Hydrolases"/>
    <property type="match status" value="1"/>
</dbReference>
<dbReference type="PROSITE" id="PS00155">
    <property type="entry name" value="CUTINASE_1"/>
    <property type="match status" value="1"/>
</dbReference>
<dbReference type="PROSITE" id="PS00931">
    <property type="entry name" value="CUTINASE_2"/>
    <property type="match status" value="1"/>
</dbReference>
<organism evidence="7">
    <name type="scientific">Hypocrea jecorina (strain QM6a)</name>
    <name type="common">Trichoderma reesei</name>
    <dbReference type="NCBI Taxonomy" id="431241"/>
    <lineage>
        <taxon>Eukaryota</taxon>
        <taxon>Fungi</taxon>
        <taxon>Dikarya</taxon>
        <taxon>Ascomycota</taxon>
        <taxon>Pezizomycotina</taxon>
        <taxon>Sordariomycetes</taxon>
        <taxon>Hypocreomycetidae</taxon>
        <taxon>Hypocreales</taxon>
        <taxon>Hypocreaceae</taxon>
        <taxon>Trichoderma</taxon>
    </lineage>
</organism>
<evidence type="ECO:0000250" key="1">
    <source>
        <dbReference type="UniProtKB" id="A0A024SC78"/>
    </source>
</evidence>
<evidence type="ECO:0000250" key="2">
    <source>
        <dbReference type="UniProtKB" id="P00590"/>
    </source>
</evidence>
<evidence type="ECO:0000255" key="3"/>
<evidence type="ECO:0000255" key="4">
    <source>
        <dbReference type="RuleBase" id="RU361263"/>
    </source>
</evidence>
<evidence type="ECO:0000305" key="5"/>
<evidence type="ECO:0000312" key="6">
    <source>
        <dbReference type="EMBL" id="EGR49371.1"/>
    </source>
</evidence>
<evidence type="ECO:0000312" key="7">
    <source>
        <dbReference type="Proteomes" id="UP000008984"/>
    </source>
</evidence>
<accession>G0RH85</accession>